<gene>
    <name evidence="1" type="primary">nuoI</name>
    <name type="ordered locus">FTA_1930</name>
</gene>
<reference key="1">
    <citation type="journal article" date="2009" name="PLoS ONE">
        <title>Complete genome sequence of Francisella tularensis subspecies holarctica FTNF002-00.</title>
        <authorList>
            <person name="Barabote R.D."/>
            <person name="Xie G."/>
            <person name="Brettin T.S."/>
            <person name="Hinrichs S.H."/>
            <person name="Fey P.D."/>
            <person name="Jay J.J."/>
            <person name="Engle J.L."/>
            <person name="Godbole S.D."/>
            <person name="Noronha J.M."/>
            <person name="Scheuermann R.H."/>
            <person name="Zhou L.W."/>
            <person name="Lion C."/>
            <person name="Dempsey M.P."/>
        </authorList>
    </citation>
    <scope>NUCLEOTIDE SEQUENCE [LARGE SCALE GENOMIC DNA]</scope>
    <source>
        <strain>FTNF002-00 / FTA</strain>
    </source>
</reference>
<comment type="function">
    <text evidence="1">NDH-1 shuttles electrons from NADH, via FMN and iron-sulfur (Fe-S) centers, to quinones in the respiratory chain. The immediate electron acceptor for the enzyme in this species is believed to be ubiquinone. Couples the redox reaction to proton translocation (for every two electrons transferred, four hydrogen ions are translocated across the cytoplasmic membrane), and thus conserves the redox energy in a proton gradient.</text>
</comment>
<comment type="catalytic activity">
    <reaction evidence="1">
        <text>a quinone + NADH + 5 H(+)(in) = a quinol + NAD(+) + 4 H(+)(out)</text>
        <dbReference type="Rhea" id="RHEA:57888"/>
        <dbReference type="ChEBI" id="CHEBI:15378"/>
        <dbReference type="ChEBI" id="CHEBI:24646"/>
        <dbReference type="ChEBI" id="CHEBI:57540"/>
        <dbReference type="ChEBI" id="CHEBI:57945"/>
        <dbReference type="ChEBI" id="CHEBI:132124"/>
    </reaction>
</comment>
<comment type="cofactor">
    <cofactor evidence="1">
        <name>[4Fe-4S] cluster</name>
        <dbReference type="ChEBI" id="CHEBI:49883"/>
    </cofactor>
    <text evidence="1">Binds 2 [4Fe-4S] clusters per subunit.</text>
</comment>
<comment type="subunit">
    <text evidence="1">NDH-1 is composed of 14 different subunits. Subunits NuoA, H, J, K, L, M, N constitute the membrane sector of the complex.</text>
</comment>
<comment type="subcellular location">
    <subcellularLocation>
        <location evidence="1">Cell inner membrane</location>
        <topology evidence="1">Peripheral membrane protein</topology>
    </subcellularLocation>
</comment>
<comment type="similarity">
    <text evidence="1">Belongs to the complex I 23 kDa subunit family.</text>
</comment>
<protein>
    <recommendedName>
        <fullName evidence="1">NADH-quinone oxidoreductase subunit I</fullName>
        <ecNumber evidence="1">7.1.1.-</ecNumber>
    </recommendedName>
    <alternativeName>
        <fullName evidence="1">NADH dehydrogenase I subunit I</fullName>
    </alternativeName>
    <alternativeName>
        <fullName evidence="1">NDH-1 subunit I</fullName>
    </alternativeName>
</protein>
<name>NUOI_FRATF</name>
<organism>
    <name type="scientific">Francisella tularensis subsp. holarctica (strain FTNF002-00 / FTA)</name>
    <dbReference type="NCBI Taxonomy" id="458234"/>
    <lineage>
        <taxon>Bacteria</taxon>
        <taxon>Pseudomonadati</taxon>
        <taxon>Pseudomonadota</taxon>
        <taxon>Gammaproteobacteria</taxon>
        <taxon>Thiotrichales</taxon>
        <taxon>Francisellaceae</taxon>
        <taxon>Francisella</taxon>
    </lineage>
</organism>
<sequence length="162" mass="18844">MRNITNFLKTFLLWELLKGLKVTGKHFFTRKVTVQYPDEKTPISNRFRGLHALRRYENGEERCIACKLCEVVCPALAITINSTEREDGTRRTSSYEIDLFKCIFCGYCEESCPVDSIVETNILEYHFEERGENIMTKAKLLAIGDKYEAQIAADRLQDKDFR</sequence>
<dbReference type="EC" id="7.1.1.-" evidence="1"/>
<dbReference type="EMBL" id="CP000803">
    <property type="protein sequence ID" value="ABU62405.1"/>
    <property type="molecule type" value="Genomic_DNA"/>
</dbReference>
<dbReference type="RefSeq" id="WP_003035182.1">
    <property type="nucleotide sequence ID" value="NC_009749.1"/>
</dbReference>
<dbReference type="SMR" id="A7NEK2"/>
<dbReference type="GeneID" id="75264597"/>
<dbReference type="KEGG" id="fta:FTA_1930"/>
<dbReference type="HOGENOM" id="CLU_067218_5_1_6"/>
<dbReference type="GO" id="GO:0005886">
    <property type="term" value="C:plasma membrane"/>
    <property type="evidence" value="ECO:0007669"/>
    <property type="project" value="UniProtKB-SubCell"/>
</dbReference>
<dbReference type="GO" id="GO:0051539">
    <property type="term" value="F:4 iron, 4 sulfur cluster binding"/>
    <property type="evidence" value="ECO:0007669"/>
    <property type="project" value="UniProtKB-KW"/>
</dbReference>
<dbReference type="GO" id="GO:0005506">
    <property type="term" value="F:iron ion binding"/>
    <property type="evidence" value="ECO:0007669"/>
    <property type="project" value="UniProtKB-UniRule"/>
</dbReference>
<dbReference type="GO" id="GO:0050136">
    <property type="term" value="F:NADH:ubiquinone reductase (non-electrogenic) activity"/>
    <property type="evidence" value="ECO:0007669"/>
    <property type="project" value="UniProtKB-UniRule"/>
</dbReference>
<dbReference type="GO" id="GO:0048038">
    <property type="term" value="F:quinone binding"/>
    <property type="evidence" value="ECO:0007669"/>
    <property type="project" value="UniProtKB-KW"/>
</dbReference>
<dbReference type="GO" id="GO:0009060">
    <property type="term" value="P:aerobic respiration"/>
    <property type="evidence" value="ECO:0007669"/>
    <property type="project" value="TreeGrafter"/>
</dbReference>
<dbReference type="FunFam" id="3.30.70.3270:FF:000003">
    <property type="entry name" value="NADH-quinone oxidoreductase subunit I"/>
    <property type="match status" value="1"/>
</dbReference>
<dbReference type="Gene3D" id="3.30.70.3270">
    <property type="match status" value="1"/>
</dbReference>
<dbReference type="HAMAP" id="MF_01351">
    <property type="entry name" value="NDH1_NuoI"/>
    <property type="match status" value="1"/>
</dbReference>
<dbReference type="InterPro" id="IPR017896">
    <property type="entry name" value="4Fe4S_Fe-S-bd"/>
</dbReference>
<dbReference type="InterPro" id="IPR017900">
    <property type="entry name" value="4Fe4S_Fe_S_CS"/>
</dbReference>
<dbReference type="InterPro" id="IPR010226">
    <property type="entry name" value="NADH_quinone_OxRdtase_chainI"/>
</dbReference>
<dbReference type="NCBIfam" id="TIGR01971">
    <property type="entry name" value="NuoI"/>
    <property type="match status" value="1"/>
</dbReference>
<dbReference type="NCBIfam" id="NF004538">
    <property type="entry name" value="PRK05888.1-4"/>
    <property type="match status" value="1"/>
</dbReference>
<dbReference type="PANTHER" id="PTHR10849:SF20">
    <property type="entry name" value="NADH DEHYDROGENASE [UBIQUINONE] IRON-SULFUR PROTEIN 8, MITOCHONDRIAL"/>
    <property type="match status" value="1"/>
</dbReference>
<dbReference type="PANTHER" id="PTHR10849">
    <property type="entry name" value="NADH DEHYDROGENASE UBIQUINONE IRON-SULFUR PROTEIN 8, MITOCHONDRIAL"/>
    <property type="match status" value="1"/>
</dbReference>
<dbReference type="Pfam" id="PF12838">
    <property type="entry name" value="Fer4_7"/>
    <property type="match status" value="1"/>
</dbReference>
<dbReference type="SUPFAM" id="SSF54862">
    <property type="entry name" value="4Fe-4S ferredoxins"/>
    <property type="match status" value="1"/>
</dbReference>
<dbReference type="PROSITE" id="PS00198">
    <property type="entry name" value="4FE4S_FER_1"/>
    <property type="match status" value="2"/>
</dbReference>
<dbReference type="PROSITE" id="PS51379">
    <property type="entry name" value="4FE4S_FER_2"/>
    <property type="match status" value="2"/>
</dbReference>
<feature type="chain" id="PRO_1000067768" description="NADH-quinone oxidoreductase subunit I">
    <location>
        <begin position="1"/>
        <end position="162"/>
    </location>
</feature>
<feature type="domain" description="4Fe-4S ferredoxin-type 1" evidence="1">
    <location>
        <begin position="54"/>
        <end position="83"/>
    </location>
</feature>
<feature type="domain" description="4Fe-4S ferredoxin-type 2" evidence="1">
    <location>
        <begin position="93"/>
        <end position="122"/>
    </location>
</feature>
<feature type="binding site" evidence="1">
    <location>
        <position position="63"/>
    </location>
    <ligand>
        <name>[4Fe-4S] cluster</name>
        <dbReference type="ChEBI" id="CHEBI:49883"/>
        <label>1</label>
    </ligand>
</feature>
<feature type="binding site" evidence="1">
    <location>
        <position position="66"/>
    </location>
    <ligand>
        <name>[4Fe-4S] cluster</name>
        <dbReference type="ChEBI" id="CHEBI:49883"/>
        <label>1</label>
    </ligand>
</feature>
<feature type="binding site" evidence="1">
    <location>
        <position position="69"/>
    </location>
    <ligand>
        <name>[4Fe-4S] cluster</name>
        <dbReference type="ChEBI" id="CHEBI:49883"/>
        <label>1</label>
    </ligand>
</feature>
<feature type="binding site" evidence="1">
    <location>
        <position position="73"/>
    </location>
    <ligand>
        <name>[4Fe-4S] cluster</name>
        <dbReference type="ChEBI" id="CHEBI:49883"/>
        <label>2</label>
    </ligand>
</feature>
<feature type="binding site" evidence="1">
    <location>
        <position position="102"/>
    </location>
    <ligand>
        <name>[4Fe-4S] cluster</name>
        <dbReference type="ChEBI" id="CHEBI:49883"/>
        <label>2</label>
    </ligand>
</feature>
<feature type="binding site" evidence="1">
    <location>
        <position position="105"/>
    </location>
    <ligand>
        <name>[4Fe-4S] cluster</name>
        <dbReference type="ChEBI" id="CHEBI:49883"/>
        <label>2</label>
    </ligand>
</feature>
<feature type="binding site" evidence="1">
    <location>
        <position position="108"/>
    </location>
    <ligand>
        <name>[4Fe-4S] cluster</name>
        <dbReference type="ChEBI" id="CHEBI:49883"/>
        <label>2</label>
    </ligand>
</feature>
<feature type="binding site" evidence="1">
    <location>
        <position position="112"/>
    </location>
    <ligand>
        <name>[4Fe-4S] cluster</name>
        <dbReference type="ChEBI" id="CHEBI:49883"/>
        <label>1</label>
    </ligand>
</feature>
<keyword id="KW-0004">4Fe-4S</keyword>
<keyword id="KW-0997">Cell inner membrane</keyword>
<keyword id="KW-1003">Cell membrane</keyword>
<keyword id="KW-0408">Iron</keyword>
<keyword id="KW-0411">Iron-sulfur</keyword>
<keyword id="KW-0472">Membrane</keyword>
<keyword id="KW-0479">Metal-binding</keyword>
<keyword id="KW-0520">NAD</keyword>
<keyword id="KW-0874">Quinone</keyword>
<keyword id="KW-0677">Repeat</keyword>
<keyword id="KW-1278">Translocase</keyword>
<keyword id="KW-0830">Ubiquinone</keyword>
<accession>A7NEK2</accession>
<proteinExistence type="inferred from homology"/>
<evidence type="ECO:0000255" key="1">
    <source>
        <dbReference type="HAMAP-Rule" id="MF_01351"/>
    </source>
</evidence>